<organism>
    <name type="scientific">Helicobacter felis</name>
    <dbReference type="NCBI Taxonomy" id="214"/>
    <lineage>
        <taxon>Bacteria</taxon>
        <taxon>Pseudomonadati</taxon>
        <taxon>Campylobacterota</taxon>
        <taxon>Epsilonproteobacteria</taxon>
        <taxon>Campylobacterales</taxon>
        <taxon>Helicobacteraceae</taxon>
        <taxon>Helicobacter</taxon>
    </lineage>
</organism>
<gene>
    <name evidence="1" type="primary">ureA</name>
</gene>
<sequence>MKLTPKELDKLMLHYAGRLAEEALARGVKLNYTEAVALISGRVMEKARDGNKSVADLMQEGRTWLKKENVMDGVASMIHEVGIEANFPDGTKLVTIHTPVEDNGKLAPGEVFLKNEDITINAGKEAISLKVKNKGDRPVQVGSHFHFFEVNKLLDFDRAKSFCKRLDIASGTAVRFEPGEEKSVELIDIGGNKRIYGFNSLVDRQADADGKKLGLKRAKEKGFGSVNCGCEATKDKQ</sequence>
<keyword id="KW-0963">Cytoplasm</keyword>
<keyword id="KW-0378">Hydrolase</keyword>
<proteinExistence type="inferred from homology"/>
<reference key="1">
    <citation type="journal article" date="1993" name="Mol. Microbiol.">
        <title>Cloning, expression and sequencing of Helicobacter felis urease genes.</title>
        <authorList>
            <person name="Ferrero R.L."/>
            <person name="Labigne A."/>
        </authorList>
    </citation>
    <scope>NUCLEOTIDE SEQUENCE [GENOMIC DNA]</scope>
</reference>
<name>URE23_HELFE</name>
<feature type="chain" id="PRO_0000098070" description="Urease subunit alpha">
    <location>
        <begin position="1"/>
        <end position="237"/>
    </location>
</feature>
<feature type="region of interest" description="Urease gamma">
    <location>
        <begin position="1"/>
        <end position="102"/>
    </location>
</feature>
<feature type="region of interest" description="Urease beta">
    <location>
        <begin position="103"/>
        <end position="237"/>
    </location>
</feature>
<accession>Q08715</accession>
<dbReference type="EC" id="3.5.1.5" evidence="1"/>
<dbReference type="EMBL" id="X69080">
    <property type="protein sequence ID" value="CAA48825.1"/>
    <property type="molecule type" value="Genomic_DNA"/>
</dbReference>
<dbReference type="PIR" id="S35290">
    <property type="entry name" value="S35290"/>
</dbReference>
<dbReference type="SMR" id="Q08715"/>
<dbReference type="UniPathway" id="UPA00258">
    <property type="reaction ID" value="UER00370"/>
</dbReference>
<dbReference type="GO" id="GO:0035550">
    <property type="term" value="C:urease complex"/>
    <property type="evidence" value="ECO:0007669"/>
    <property type="project" value="InterPro"/>
</dbReference>
<dbReference type="GO" id="GO:0016151">
    <property type="term" value="F:nickel cation binding"/>
    <property type="evidence" value="ECO:0007669"/>
    <property type="project" value="InterPro"/>
</dbReference>
<dbReference type="GO" id="GO:0009039">
    <property type="term" value="F:urease activity"/>
    <property type="evidence" value="ECO:0007669"/>
    <property type="project" value="UniProtKB-UniRule"/>
</dbReference>
<dbReference type="GO" id="GO:0043419">
    <property type="term" value="P:urea catabolic process"/>
    <property type="evidence" value="ECO:0007669"/>
    <property type="project" value="UniProtKB-UniRule"/>
</dbReference>
<dbReference type="CDD" id="cd00407">
    <property type="entry name" value="Urease_beta"/>
    <property type="match status" value="1"/>
</dbReference>
<dbReference type="CDD" id="cd00390">
    <property type="entry name" value="Urease_gamma"/>
    <property type="match status" value="1"/>
</dbReference>
<dbReference type="FunFam" id="3.30.280.10:FF:000001">
    <property type="entry name" value="Urease subunit alpha"/>
    <property type="match status" value="1"/>
</dbReference>
<dbReference type="FunFam" id="2.10.150.10:FF:000001">
    <property type="entry name" value="Urease subunit beta"/>
    <property type="match status" value="1"/>
</dbReference>
<dbReference type="Gene3D" id="2.10.150.10">
    <property type="entry name" value="Urease, beta subunit"/>
    <property type="match status" value="1"/>
</dbReference>
<dbReference type="Gene3D" id="3.30.280.10">
    <property type="entry name" value="Urease, gamma-like subunit"/>
    <property type="match status" value="1"/>
</dbReference>
<dbReference type="HAMAP" id="MF_01954">
    <property type="entry name" value="Urease_beta"/>
    <property type="match status" value="1"/>
</dbReference>
<dbReference type="HAMAP" id="MF_01955">
    <property type="entry name" value="Urease_beta_gamma"/>
    <property type="match status" value="1"/>
</dbReference>
<dbReference type="InterPro" id="IPR002019">
    <property type="entry name" value="Urease_beta-like"/>
</dbReference>
<dbReference type="InterPro" id="IPR036461">
    <property type="entry name" value="Urease_betasu_sf"/>
</dbReference>
<dbReference type="InterPro" id="IPR008223">
    <property type="entry name" value="Urease_gamma-beta_su"/>
</dbReference>
<dbReference type="InterPro" id="IPR002026">
    <property type="entry name" value="Urease_gamma/gamma-beta_su"/>
</dbReference>
<dbReference type="InterPro" id="IPR036463">
    <property type="entry name" value="Urease_gamma_sf"/>
</dbReference>
<dbReference type="InterPro" id="IPR050069">
    <property type="entry name" value="Urease_subunit"/>
</dbReference>
<dbReference type="NCBIfam" id="NF009671">
    <property type="entry name" value="PRK13192.1"/>
    <property type="match status" value="1"/>
</dbReference>
<dbReference type="NCBIfam" id="NF009682">
    <property type="entry name" value="PRK13203.1"/>
    <property type="match status" value="1"/>
</dbReference>
<dbReference type="NCBIfam" id="NF009712">
    <property type="entry name" value="PRK13241.1"/>
    <property type="match status" value="1"/>
</dbReference>
<dbReference type="NCBIfam" id="NF010592">
    <property type="entry name" value="PRK13986.1"/>
    <property type="match status" value="1"/>
</dbReference>
<dbReference type="NCBIfam" id="TIGR00192">
    <property type="entry name" value="urease_beta"/>
    <property type="match status" value="1"/>
</dbReference>
<dbReference type="NCBIfam" id="TIGR00193">
    <property type="entry name" value="urease_gam"/>
    <property type="match status" value="1"/>
</dbReference>
<dbReference type="PANTHER" id="PTHR33569">
    <property type="entry name" value="UREASE"/>
    <property type="match status" value="1"/>
</dbReference>
<dbReference type="PANTHER" id="PTHR33569:SF1">
    <property type="entry name" value="UREASE"/>
    <property type="match status" value="1"/>
</dbReference>
<dbReference type="Pfam" id="PF00699">
    <property type="entry name" value="Urease_beta"/>
    <property type="match status" value="1"/>
</dbReference>
<dbReference type="Pfam" id="PF00547">
    <property type="entry name" value="Urease_gamma"/>
    <property type="match status" value="1"/>
</dbReference>
<dbReference type="PIRSF" id="PIRSF001225">
    <property type="entry name" value="Urease_gammabeta"/>
    <property type="match status" value="1"/>
</dbReference>
<dbReference type="SUPFAM" id="SSF51278">
    <property type="entry name" value="Urease, beta-subunit"/>
    <property type="match status" value="1"/>
</dbReference>
<dbReference type="SUPFAM" id="SSF54111">
    <property type="entry name" value="Urease, gamma-subunit"/>
    <property type="match status" value="1"/>
</dbReference>
<protein>
    <recommendedName>
        <fullName evidence="1">Urease subunit alpha</fullName>
        <ecNumber evidence="1">3.5.1.5</ecNumber>
    </recommendedName>
    <alternativeName>
        <fullName evidence="1">Urea amidohydrolase subunit alpha</fullName>
    </alternativeName>
</protein>
<evidence type="ECO:0000255" key="1">
    <source>
        <dbReference type="HAMAP-Rule" id="MF_01955"/>
    </source>
</evidence>
<evidence type="ECO:0000305" key="2"/>
<comment type="catalytic activity">
    <reaction evidence="1">
        <text>urea + 2 H2O + H(+) = hydrogencarbonate + 2 NH4(+)</text>
        <dbReference type="Rhea" id="RHEA:20557"/>
        <dbReference type="ChEBI" id="CHEBI:15377"/>
        <dbReference type="ChEBI" id="CHEBI:15378"/>
        <dbReference type="ChEBI" id="CHEBI:16199"/>
        <dbReference type="ChEBI" id="CHEBI:17544"/>
        <dbReference type="ChEBI" id="CHEBI:28938"/>
        <dbReference type="EC" id="3.5.1.5"/>
    </reaction>
</comment>
<comment type="pathway">
    <text evidence="1">Nitrogen metabolism; urea degradation; CO(2) and NH(3) from urea (urease route): step 1/1.</text>
</comment>
<comment type="subunit">
    <text evidence="1">Heterohexamer of 3 UreA (alpha) and 3 UreB (beta) subunits.</text>
</comment>
<comment type="subcellular location">
    <subcellularLocation>
        <location evidence="1">Cytoplasm</location>
    </subcellularLocation>
</comment>
<comment type="similarity">
    <text evidence="1">In the N-terminal section; belongs to the urease gamma subunit family.</text>
</comment>
<comment type="similarity">
    <text evidence="1">In the C-terminal section; belongs to the urease beta subunit family.</text>
</comment>
<comment type="caution">
    <text evidence="2">The orthologous protein is known as the gamma/beta subunit (UreAB) in most other bacteria.</text>
</comment>